<proteinExistence type="inferred from homology"/>
<name>Y1318_STAAW</name>
<reference key="1">
    <citation type="journal article" date="2002" name="Lancet">
        <title>Genome and virulence determinants of high virulence community-acquired MRSA.</title>
        <authorList>
            <person name="Baba T."/>
            <person name="Takeuchi F."/>
            <person name="Kuroda M."/>
            <person name="Yuzawa H."/>
            <person name="Aoki K."/>
            <person name="Oguchi A."/>
            <person name="Nagai Y."/>
            <person name="Iwama N."/>
            <person name="Asano K."/>
            <person name="Naimi T."/>
            <person name="Kuroda H."/>
            <person name="Cui L."/>
            <person name="Yamamoto K."/>
            <person name="Hiramatsu K."/>
        </authorList>
    </citation>
    <scope>NUCLEOTIDE SEQUENCE [LARGE SCALE GENOMIC DNA]</scope>
    <source>
        <strain>MW2</strain>
    </source>
</reference>
<accession>Q7A0W2</accession>
<comment type="similarity">
    <text evidence="1">Belongs to the bacilliredoxin family.</text>
</comment>
<dbReference type="EMBL" id="BA000033">
    <property type="protein sequence ID" value="BAB95183.1"/>
    <property type="molecule type" value="Genomic_DNA"/>
</dbReference>
<dbReference type="SMR" id="Q7A0W2"/>
<dbReference type="KEGG" id="sam:MW1318"/>
<dbReference type="HOGENOM" id="CLU_132521_0_0_9"/>
<dbReference type="GO" id="GO:0045454">
    <property type="term" value="P:cell redox homeostasis"/>
    <property type="evidence" value="ECO:0000250"/>
    <property type="project" value="UniProtKB"/>
</dbReference>
<dbReference type="Gene3D" id="3.40.30.10">
    <property type="entry name" value="Glutaredoxin"/>
    <property type="match status" value="1"/>
</dbReference>
<dbReference type="InterPro" id="IPR009474">
    <property type="entry name" value="BrxB/BrxA"/>
</dbReference>
<dbReference type="NCBIfam" id="TIGR04191">
    <property type="entry name" value="YphP_YqiW"/>
    <property type="match status" value="1"/>
</dbReference>
<dbReference type="PANTHER" id="PTHR40052:SF2">
    <property type="entry name" value="BACILLIREDOXIN BRXA"/>
    <property type="match status" value="1"/>
</dbReference>
<dbReference type="PANTHER" id="PTHR40052">
    <property type="entry name" value="UPF0403 PROTEIN YQIW-RELATED"/>
    <property type="match status" value="1"/>
</dbReference>
<dbReference type="Pfam" id="PF06491">
    <property type="entry name" value="Disulph_isomer"/>
    <property type="match status" value="1"/>
</dbReference>
<gene>
    <name type="ordered locus">MW1318</name>
</gene>
<organism>
    <name type="scientific">Staphylococcus aureus (strain MW2)</name>
    <dbReference type="NCBI Taxonomy" id="196620"/>
    <lineage>
        <taxon>Bacteria</taxon>
        <taxon>Bacillati</taxon>
        <taxon>Bacillota</taxon>
        <taxon>Bacilli</taxon>
        <taxon>Bacillales</taxon>
        <taxon>Staphylococcaceae</taxon>
        <taxon>Staphylococcus</taxon>
    </lineage>
</organism>
<protein>
    <recommendedName>
        <fullName evidence="1">Bacilliredoxin MW1318</fullName>
    </recommendedName>
</protein>
<feature type="chain" id="PRO_0000272005" description="Bacilliredoxin MW1318">
    <location>
        <begin position="1"/>
        <end position="145"/>
    </location>
</feature>
<sequence length="145" mass="16014">MNAYDAYMKEIAQQMRGELTQNGFTSLETSEAVSEYMNQVNADDTTFVVINSTCGCAAGLARPAAVAVATQNEHRPTNTVTVFAGQDKEATATMREFIQQAPSSPSYALFKGQDLVYFMPREFIEGRDINDIAMDLKDAFDENCK</sequence>
<evidence type="ECO:0000305" key="1"/>